<comment type="function">
    <text evidence="1">Bifunctional enzyme with both catalase and broad-spectrum peroxidase activity.</text>
</comment>
<comment type="catalytic activity">
    <reaction evidence="1">
        <text>H2O2 + AH2 = A + 2 H2O</text>
        <dbReference type="Rhea" id="RHEA:30275"/>
        <dbReference type="ChEBI" id="CHEBI:13193"/>
        <dbReference type="ChEBI" id="CHEBI:15377"/>
        <dbReference type="ChEBI" id="CHEBI:16240"/>
        <dbReference type="ChEBI" id="CHEBI:17499"/>
        <dbReference type="EC" id="1.11.1.21"/>
    </reaction>
</comment>
<comment type="catalytic activity">
    <reaction evidence="1">
        <text>2 H2O2 = O2 + 2 H2O</text>
        <dbReference type="Rhea" id="RHEA:20309"/>
        <dbReference type="ChEBI" id="CHEBI:15377"/>
        <dbReference type="ChEBI" id="CHEBI:15379"/>
        <dbReference type="ChEBI" id="CHEBI:16240"/>
        <dbReference type="EC" id="1.11.1.21"/>
    </reaction>
</comment>
<comment type="cofactor">
    <cofactor evidence="1">
        <name>heme b</name>
        <dbReference type="ChEBI" id="CHEBI:60344"/>
    </cofactor>
    <text evidence="1">Binds 1 heme b (iron(II)-protoporphyrin IX) group per dimer.</text>
</comment>
<comment type="subunit">
    <text evidence="1">Homodimer or homotetramer.</text>
</comment>
<comment type="PTM">
    <text evidence="1">Formation of the three residue Trp-Tyr-Met cross-link is important for the catalase, but not the peroxidase activity of the enzyme.</text>
</comment>
<comment type="similarity">
    <text evidence="1">Belongs to the peroxidase family. Peroxidase/catalase subfamily.</text>
</comment>
<reference key="1">
    <citation type="journal article" date="2009" name="J. Bacteriol.">
        <title>Complete and draft genome sequences of six members of the Aquificales.</title>
        <authorList>
            <person name="Reysenbach A.-L."/>
            <person name="Hamamura N."/>
            <person name="Podar M."/>
            <person name="Griffiths E."/>
            <person name="Ferreira S."/>
            <person name="Hochstein R."/>
            <person name="Heidelberg J."/>
            <person name="Johnson J."/>
            <person name="Mead D."/>
            <person name="Pohorille A."/>
            <person name="Sarmiento M."/>
            <person name="Schweighofer K."/>
            <person name="Seshadri R."/>
            <person name="Voytek M.A."/>
        </authorList>
    </citation>
    <scope>NUCLEOTIDE SEQUENCE [LARGE SCALE GENOMIC DNA]</scope>
    <source>
        <strain>DSM 14350 / EX-H1</strain>
    </source>
</reference>
<feature type="chain" id="PRO_1000216225" description="Catalase-peroxidase">
    <location>
        <begin position="1"/>
        <end position="727"/>
    </location>
</feature>
<feature type="active site" description="Proton acceptor" evidence="1">
    <location>
        <position position="96"/>
    </location>
</feature>
<feature type="binding site" description="axial binding residue" evidence="1">
    <location>
        <position position="259"/>
    </location>
    <ligand>
        <name>heme b</name>
        <dbReference type="ChEBI" id="CHEBI:60344"/>
    </ligand>
    <ligandPart>
        <name>Fe</name>
        <dbReference type="ChEBI" id="CHEBI:18248"/>
    </ligandPart>
</feature>
<feature type="site" description="Transition state stabilizer" evidence="1">
    <location>
        <position position="92"/>
    </location>
</feature>
<feature type="cross-link" description="Tryptophyl-tyrosyl-methioninium (Trp-Tyr) (with M-244)" evidence="1">
    <location>
        <begin position="95"/>
        <end position="218"/>
    </location>
</feature>
<feature type="cross-link" description="Tryptophyl-tyrosyl-methioninium (Tyr-Met) (with W-95)" evidence="1">
    <location>
        <begin position="218"/>
        <end position="244"/>
    </location>
</feature>
<gene>
    <name evidence="1" type="primary">katG</name>
    <name type="ordered locus">PERMA_0962</name>
</gene>
<proteinExistence type="inferred from homology"/>
<name>KATG_PERMH</name>
<organism>
    <name type="scientific">Persephonella marina (strain DSM 14350 / EX-H1)</name>
    <dbReference type="NCBI Taxonomy" id="123214"/>
    <lineage>
        <taxon>Bacteria</taxon>
        <taxon>Pseudomonadati</taxon>
        <taxon>Aquificota</taxon>
        <taxon>Aquificia</taxon>
        <taxon>Aquificales</taxon>
        <taxon>Hydrogenothermaceae</taxon>
        <taxon>Persephonella</taxon>
    </lineage>
</organism>
<evidence type="ECO:0000255" key="1">
    <source>
        <dbReference type="HAMAP-Rule" id="MF_01961"/>
    </source>
</evidence>
<sequence length="727" mass="82627">MDKKECGFSIDDFLYAVEGGNTISKWWPHRLNLKILQQNNPDLVPFDKNFNYREEFSKLDYFELKEDIRRIMRESQEWWPADYGHYGPLFIRMAWHSAGTYRIIDGKGGANGGNQRFAPVNSWPDNVNLDRARRLLWPVKKKYGNKISWADLMILAGNVALEDMGFKTIGFGGGREDIWEPEIDTYWGPETEWLADMRHSEEGKIKGPLAAVQMGLIYVNPEGPNGEPDVLGAAKDIKESFGKMGMSIEETVALIAGGHTFGKCHGAADPSKYLGPEPEAAPIEQQGLGWKNSYGTGKGKDTITSGLEGAWTPTPIKWDNSFLRILFKYEWNLQKSPAGAWQWVAVNPDREDLVPDAHIPGKYHPPIMLTTDLALKLDPELSEVSKRFLEDPEYFRDAFAKAWFKLTHRDLGPKWRYLGPEVPEEDFIWQDPIPEINYQLIDQDDIKNLKEKILKSDATVTELVYTAWSAASTFRKSDRRGGVNGGRIALEPQISWEVNKTHVPKVLKILNEIKEDFNKQSSDKKVSLADLIVLAGCAAVEEAIKRAGFDIQVPFRPGRNDTTQELTDIKSFSFLEPVADGFRNYIKPECDIPEEYLLIDKADQLNLTVPQMCVLVGGLRVLGANYDSTDYGVFTDNVGTLSNDFFVNLLDMSIVWKPVRVNNRDIFEGYDRKTGDLVYRGTRVDLIFGSNSELRAQAEFYAQDDNREKFIRDFVEAWDKVMNLDIT</sequence>
<keyword id="KW-0349">Heme</keyword>
<keyword id="KW-0376">Hydrogen peroxide</keyword>
<keyword id="KW-0408">Iron</keyword>
<keyword id="KW-0479">Metal-binding</keyword>
<keyword id="KW-0560">Oxidoreductase</keyword>
<keyword id="KW-0575">Peroxidase</keyword>
<keyword id="KW-1185">Reference proteome</keyword>
<protein>
    <recommendedName>
        <fullName evidence="1">Catalase-peroxidase</fullName>
        <shortName evidence="1">CP</shortName>
        <ecNumber evidence="1">1.11.1.21</ecNumber>
    </recommendedName>
    <alternativeName>
        <fullName evidence="1">Peroxidase/catalase</fullName>
    </alternativeName>
</protein>
<accession>C0QQ02</accession>
<dbReference type="EC" id="1.11.1.21" evidence="1"/>
<dbReference type="EMBL" id="CP001230">
    <property type="protein sequence ID" value="ACO03130.1"/>
    <property type="molecule type" value="Genomic_DNA"/>
</dbReference>
<dbReference type="RefSeq" id="WP_012675369.1">
    <property type="nucleotide sequence ID" value="NC_012440.1"/>
</dbReference>
<dbReference type="SMR" id="C0QQ02"/>
<dbReference type="STRING" id="123214.PERMA_0962"/>
<dbReference type="PaxDb" id="123214-PERMA_0962"/>
<dbReference type="KEGG" id="pmx:PERMA_0962"/>
<dbReference type="eggNOG" id="COG0376">
    <property type="taxonomic scope" value="Bacteria"/>
</dbReference>
<dbReference type="HOGENOM" id="CLU_025424_2_0_0"/>
<dbReference type="OrthoDB" id="9759743at2"/>
<dbReference type="Proteomes" id="UP000001366">
    <property type="component" value="Chromosome"/>
</dbReference>
<dbReference type="GO" id="GO:0005829">
    <property type="term" value="C:cytosol"/>
    <property type="evidence" value="ECO:0007669"/>
    <property type="project" value="TreeGrafter"/>
</dbReference>
<dbReference type="GO" id="GO:0004096">
    <property type="term" value="F:catalase activity"/>
    <property type="evidence" value="ECO:0007669"/>
    <property type="project" value="UniProtKB-UniRule"/>
</dbReference>
<dbReference type="GO" id="GO:0020037">
    <property type="term" value="F:heme binding"/>
    <property type="evidence" value="ECO:0007669"/>
    <property type="project" value="InterPro"/>
</dbReference>
<dbReference type="GO" id="GO:0046872">
    <property type="term" value="F:metal ion binding"/>
    <property type="evidence" value="ECO:0007669"/>
    <property type="project" value="UniProtKB-KW"/>
</dbReference>
<dbReference type="GO" id="GO:0070301">
    <property type="term" value="P:cellular response to hydrogen peroxide"/>
    <property type="evidence" value="ECO:0007669"/>
    <property type="project" value="TreeGrafter"/>
</dbReference>
<dbReference type="GO" id="GO:0042744">
    <property type="term" value="P:hydrogen peroxide catabolic process"/>
    <property type="evidence" value="ECO:0007669"/>
    <property type="project" value="UniProtKB-KW"/>
</dbReference>
<dbReference type="CDD" id="cd00649">
    <property type="entry name" value="catalase_peroxidase_1"/>
    <property type="match status" value="1"/>
</dbReference>
<dbReference type="CDD" id="cd08200">
    <property type="entry name" value="catalase_peroxidase_2"/>
    <property type="match status" value="1"/>
</dbReference>
<dbReference type="FunFam" id="1.10.420.10:FF:000004">
    <property type="entry name" value="Catalase-peroxidase"/>
    <property type="match status" value="1"/>
</dbReference>
<dbReference type="FunFam" id="1.10.520.10:FF:000002">
    <property type="entry name" value="Catalase-peroxidase"/>
    <property type="match status" value="1"/>
</dbReference>
<dbReference type="Gene3D" id="1.10.520.10">
    <property type="match status" value="2"/>
</dbReference>
<dbReference type="Gene3D" id="1.10.420.10">
    <property type="entry name" value="Peroxidase, domain 2"/>
    <property type="match status" value="2"/>
</dbReference>
<dbReference type="HAMAP" id="MF_01961">
    <property type="entry name" value="Catal_peroxid"/>
    <property type="match status" value="1"/>
</dbReference>
<dbReference type="InterPro" id="IPR000763">
    <property type="entry name" value="Catalase_peroxidase"/>
</dbReference>
<dbReference type="InterPro" id="IPR002016">
    <property type="entry name" value="Haem_peroxidase"/>
</dbReference>
<dbReference type="InterPro" id="IPR010255">
    <property type="entry name" value="Haem_peroxidase_sf"/>
</dbReference>
<dbReference type="InterPro" id="IPR019794">
    <property type="entry name" value="Peroxidases_AS"/>
</dbReference>
<dbReference type="InterPro" id="IPR019793">
    <property type="entry name" value="Peroxidases_heam-ligand_BS"/>
</dbReference>
<dbReference type="NCBIfam" id="TIGR00198">
    <property type="entry name" value="cat_per_HPI"/>
    <property type="match status" value="1"/>
</dbReference>
<dbReference type="NCBIfam" id="NF011635">
    <property type="entry name" value="PRK15061.1"/>
    <property type="match status" value="1"/>
</dbReference>
<dbReference type="PANTHER" id="PTHR30555:SF0">
    <property type="entry name" value="CATALASE-PEROXIDASE"/>
    <property type="match status" value="1"/>
</dbReference>
<dbReference type="PANTHER" id="PTHR30555">
    <property type="entry name" value="HYDROPEROXIDASE I, BIFUNCTIONAL CATALASE-PEROXIDASE"/>
    <property type="match status" value="1"/>
</dbReference>
<dbReference type="Pfam" id="PF00141">
    <property type="entry name" value="peroxidase"/>
    <property type="match status" value="2"/>
</dbReference>
<dbReference type="PRINTS" id="PR00460">
    <property type="entry name" value="BPEROXIDASE"/>
</dbReference>
<dbReference type="PRINTS" id="PR00458">
    <property type="entry name" value="PEROXIDASE"/>
</dbReference>
<dbReference type="SUPFAM" id="SSF48113">
    <property type="entry name" value="Heme-dependent peroxidases"/>
    <property type="match status" value="2"/>
</dbReference>
<dbReference type="PROSITE" id="PS00435">
    <property type="entry name" value="PEROXIDASE_1"/>
    <property type="match status" value="1"/>
</dbReference>
<dbReference type="PROSITE" id="PS00436">
    <property type="entry name" value="PEROXIDASE_2"/>
    <property type="match status" value="1"/>
</dbReference>
<dbReference type="PROSITE" id="PS50873">
    <property type="entry name" value="PEROXIDASE_4"/>
    <property type="match status" value="1"/>
</dbReference>